<keyword id="KW-1003">Cell membrane</keyword>
<keyword id="KW-1015">Disulfide bond</keyword>
<keyword id="KW-0256">Endoplasmic reticulum</keyword>
<keyword id="KW-0325">Glycoprotein</keyword>
<keyword id="KW-0378">Hydrolase</keyword>
<keyword id="KW-0472">Membrane</keyword>
<keyword id="KW-0492">Microsome</keyword>
<keyword id="KW-0520">NAD</keyword>
<keyword id="KW-0521">NADP</keyword>
<keyword id="KW-1185">Reference proteome</keyword>
<keyword id="KW-0735">Signal-anchor</keyword>
<keyword id="KW-0808">Transferase</keyword>
<keyword id="KW-0812">Transmembrane</keyword>
<keyword id="KW-1133">Transmembrane helix</keyword>
<organism>
    <name type="scientific">Oryctolagus cuniculus</name>
    <name type="common">Rabbit</name>
    <dbReference type="NCBI Taxonomy" id="9986"/>
    <lineage>
        <taxon>Eukaryota</taxon>
        <taxon>Metazoa</taxon>
        <taxon>Chordata</taxon>
        <taxon>Craniata</taxon>
        <taxon>Vertebrata</taxon>
        <taxon>Euteleostomi</taxon>
        <taxon>Mammalia</taxon>
        <taxon>Eutheria</taxon>
        <taxon>Euarchontoglires</taxon>
        <taxon>Glires</taxon>
        <taxon>Lagomorpha</taxon>
        <taxon>Leporidae</taxon>
        <taxon>Oryctolagus</taxon>
    </lineage>
</organism>
<feature type="chain" id="PRO_0000144069" description="ADP-ribosyl cyclase/cyclic ADP-ribose hydrolase 1">
    <location>
        <begin position="1"/>
        <end position="298"/>
    </location>
</feature>
<feature type="topological domain" description="Cytoplasmic" evidence="3">
    <location>
        <begin position="1"/>
        <end position="21"/>
    </location>
</feature>
<feature type="transmembrane region" description="Helical; Signal-anchor for type II membrane protein" evidence="3">
    <location>
        <begin position="22"/>
        <end position="42"/>
    </location>
</feature>
<feature type="topological domain" description="Extracellular" evidence="3">
    <location>
        <begin position="43"/>
        <end position="298"/>
    </location>
</feature>
<feature type="active site" evidence="1">
    <location>
        <position position="117"/>
    </location>
</feature>
<feature type="active site" evidence="1">
    <location>
        <position position="199"/>
    </location>
</feature>
<feature type="glycosylation site" description="N-linked (GlcNAc...) asparagine" evidence="3">
    <location>
        <position position="98"/>
    </location>
</feature>
<feature type="glycosylation site" description="N-linked (GlcNAc...) asparagine" evidence="3">
    <location>
        <position position="118"/>
    </location>
</feature>
<feature type="glycosylation site" description="N-linked (GlcNAc...) asparagine" evidence="3">
    <location>
        <position position="177"/>
    </location>
</feature>
<feature type="glycosylation site" description="N-linked (GlcNAc...) asparagine" evidence="3">
    <location>
        <position position="207"/>
    </location>
</feature>
<feature type="glycosylation site" description="N-linked (GlcNAc...) asparagine" evidence="3">
    <location>
        <position position="268"/>
    </location>
</feature>
<feature type="disulfide bond" evidence="1">
    <location>
        <begin position="64"/>
        <end position="80"/>
    </location>
</feature>
<feature type="disulfide bond" evidence="1">
    <location>
        <begin position="97"/>
        <end position="178"/>
    </location>
</feature>
<feature type="disulfide bond" evidence="1">
    <location>
        <begin position="158"/>
        <end position="171"/>
    </location>
</feature>
<feature type="disulfide bond" evidence="1">
    <location>
        <begin position="252"/>
        <end position="273"/>
    </location>
</feature>
<feature type="disulfide bond" evidence="1">
    <location>
        <begin position="285"/>
        <end position="294"/>
    </location>
</feature>
<accession>Q9MZ03</accession>
<protein>
    <recommendedName>
        <fullName evidence="6">ADP-ribosyl cyclase/cyclic ADP-ribose hydrolase 1</fullName>
        <ecNumber evidence="8 9">3.2.2.-</ecNumber>
        <ecNumber>3.2.2.6</ecNumber>
    </recommendedName>
    <alternativeName>
        <fullName>2'-phospho-ADP-ribosyl cyclase</fullName>
    </alternativeName>
    <alternativeName>
        <fullName>2'-phospho-ADP-ribosyl cyclase/2'-phospho-cyclic-ADP-ribose transferase</fullName>
        <ecNumber>2.4.99.20</ecNumber>
    </alternativeName>
    <alternativeName>
        <fullName>2'-phospho-cyclic-ADP-ribose transferase</fullName>
    </alternativeName>
    <alternativeName>
        <fullName>ADP-ribosyl cyclase 1</fullName>
        <shortName>ADPRC 1</shortName>
    </alternativeName>
    <alternativeName>
        <fullName>Cyclic ADP-ribose hydrolase 1</fullName>
        <shortName>cADPR hydrolase 1</shortName>
    </alternativeName>
    <cdAntigenName>CD38</cdAntigenName>
</protein>
<proteinExistence type="evidence at protein level"/>
<gene>
    <name type="primary">CD38</name>
</gene>
<evidence type="ECO:0000250" key="1"/>
<evidence type="ECO:0000250" key="2">
    <source>
        <dbReference type="UniProtKB" id="P28907"/>
    </source>
</evidence>
<evidence type="ECO:0000255" key="3"/>
<evidence type="ECO:0000269" key="4">
    <source>
    </source>
</evidence>
<evidence type="ECO:0000269" key="5">
    <source>
    </source>
</evidence>
<evidence type="ECO:0000303" key="6">
    <source>
    </source>
</evidence>
<evidence type="ECO:0000305" key="7"/>
<evidence type="ECO:0000305" key="8">
    <source>
    </source>
</evidence>
<evidence type="ECO:0000305" key="9">
    <source>
    </source>
</evidence>
<comment type="function">
    <text evidence="2 8 9">Synthesizes cyclic ADP-ribose (cADPR), a second messenger for glucose-induced insulin secretion (Probable). Synthesizes the Ca(2+) mobilizer nicotinate-adenine dinucleotide phosphate, NAADP(+), from 2'-phospho-cADPR and nicotinic acid, as well as from NADP(+) and nicotinic acid. Also has cADPR hydrolase activity (By similarity).</text>
</comment>
<comment type="catalytic activity">
    <reaction evidence="8 9">
        <text>NAD(+) = cyclic ADP-beta-D-ribose + nicotinamide + H(+)</text>
        <dbReference type="Rhea" id="RHEA:38611"/>
        <dbReference type="ChEBI" id="CHEBI:15378"/>
        <dbReference type="ChEBI" id="CHEBI:17154"/>
        <dbReference type="ChEBI" id="CHEBI:57540"/>
        <dbReference type="ChEBI" id="CHEBI:73672"/>
    </reaction>
    <physiologicalReaction direction="left-to-right" evidence="8 9">
        <dbReference type="Rhea" id="RHEA:38612"/>
    </physiologicalReaction>
</comment>
<comment type="catalytic activity">
    <reaction evidence="2">
        <text>2'-phospho-cyclic ADP-ribose + nicotinate = nicotinate-adenine dinucleotide phosphate</text>
        <dbReference type="Rhea" id="RHEA:38607"/>
        <dbReference type="ChEBI" id="CHEBI:32544"/>
        <dbReference type="ChEBI" id="CHEBI:75967"/>
        <dbReference type="ChEBI" id="CHEBI:75970"/>
    </reaction>
</comment>
<comment type="catalytic activity">
    <reaction>
        <text>NAD(+) + H2O = ADP-D-ribose + nicotinamide + H(+)</text>
        <dbReference type="Rhea" id="RHEA:16301"/>
        <dbReference type="ChEBI" id="CHEBI:15377"/>
        <dbReference type="ChEBI" id="CHEBI:15378"/>
        <dbReference type="ChEBI" id="CHEBI:17154"/>
        <dbReference type="ChEBI" id="CHEBI:57540"/>
        <dbReference type="ChEBI" id="CHEBI:57967"/>
        <dbReference type="EC" id="3.2.2.6"/>
    </reaction>
</comment>
<comment type="catalytic activity">
    <reaction evidence="2">
        <text>nicotinate + NADP(+) = nicotinate-adenine dinucleotide phosphate + nicotinamide</text>
        <dbReference type="Rhea" id="RHEA:38599"/>
        <dbReference type="ChEBI" id="CHEBI:17154"/>
        <dbReference type="ChEBI" id="CHEBI:32544"/>
        <dbReference type="ChEBI" id="CHEBI:58349"/>
        <dbReference type="ChEBI" id="CHEBI:75967"/>
        <dbReference type="EC" id="2.4.99.20"/>
    </reaction>
</comment>
<comment type="subunit">
    <text evidence="2">Homodimer.</text>
</comment>
<comment type="subcellular location">
    <subcellularLocation>
        <location evidence="4">Cell membrane</location>
        <topology>Single-pass type II membrane protein</topology>
    </subcellularLocation>
    <subcellularLocation>
        <location evidence="5">Microsome membrane</location>
        <topology>Single-pass type II membrane protein</topology>
    </subcellularLocation>
    <subcellularLocation>
        <location>Endoplasmic reticulum membrane</location>
        <topology>Single-pass type II membrane protein</topology>
    </subcellularLocation>
</comment>
<comment type="tissue specificity">
    <text evidence="4">Osteoclasts.</text>
</comment>
<comment type="similarity">
    <text evidence="7">Belongs to the ADP-ribosyl cyclase family.</text>
</comment>
<reference key="1">
    <citation type="journal article" date="1999" name="J. Cell Biol.">
        <title>CD38/ADP-ribosyl cyclase: a new role in the regulation of osteoclastic bone resorption.</title>
        <authorList>
            <person name="Sun L."/>
            <person name="Adebanjo O.A."/>
            <person name="Moonga B.S."/>
            <person name="Corisdeo S."/>
            <person name="Anandatheerthavarada H.K."/>
            <person name="Biswas G."/>
            <person name="Arakawa T."/>
            <person name="Hakeda Y."/>
            <person name="Koval A."/>
            <person name="Sodam B."/>
            <person name="Bevis P.J.R."/>
            <person name="Moser A.J."/>
            <person name="Lai F.A."/>
            <person name="Epstein S."/>
            <person name="Troen B.R."/>
            <person name="Kumegawa M."/>
            <person name="Zaidi M."/>
        </authorList>
    </citation>
    <scope>NUCLEOTIDE SEQUENCE [MRNA]</scope>
    <scope>SUBCELLULAR LOCATION</scope>
    <scope>TISSUE SPECIFICITY</scope>
    <scope>FUNCTION</scope>
    <scope>CATALYTIC ACTIVITY</scope>
    <source>
        <tissue>Osteoclast</tissue>
    </source>
</reference>
<reference key="2">
    <citation type="journal article" date="1999" name="J. Cell Biol.">
        <authorList>
            <person name="Sun L."/>
            <person name="Adebanjo O.A."/>
            <person name="Moonga B.S."/>
            <person name="Corisdeo S."/>
            <person name="Anandatheerthavarada H.K."/>
            <person name="Biswas G."/>
            <person name="Arakawa T."/>
            <person name="Hakeda Y."/>
            <person name="Koval A."/>
            <person name="Sodam B."/>
            <person name="Bevis P.J.R."/>
            <person name="Moser A.J."/>
            <person name="Lai F.A."/>
            <person name="Epstein S."/>
            <person name="Troen B.R."/>
            <person name="Kumegawa M."/>
            <person name="Zaidi M."/>
        </authorList>
    </citation>
    <scope>ERRATUM OF PUBMED:10477767</scope>
</reference>
<reference key="3">
    <citation type="journal article" date="2000" name="Biochem. Biophys. Res. Commun.">
        <title>Molecular cloning, expression, and functional characterization of a novel member of the CD38 family of ADP-ribosyl cyclases.</title>
        <authorList>
            <person name="Adebanjo O.A."/>
            <person name="Koval A."/>
            <person name="Moonga B.S."/>
            <person name="Wu X.B."/>
            <person name="Yao S."/>
            <person name="Bevis P.J.R."/>
            <person name="Kumegawa M."/>
            <person name="Zaidi M."/>
            <person name="Sun L."/>
        </authorList>
    </citation>
    <scope>NUCLEOTIDE SEQUENCE [MRNA]</scope>
    <scope>FUNCTION</scope>
    <scope>SUBCELLULAR LOCATION</scope>
    <scope>CATALYTIC ACTIVITY</scope>
    <source>
        <tissue>Osteoclast</tissue>
    </source>
</reference>
<dbReference type="EC" id="3.2.2.-" evidence="8 9"/>
<dbReference type="EC" id="3.2.2.6"/>
<dbReference type="EC" id="2.4.99.20"/>
<dbReference type="EMBL" id="AF272974">
    <property type="protein sequence ID" value="AAF87715.1"/>
    <property type="molecule type" value="mRNA"/>
</dbReference>
<dbReference type="PIR" id="JC7323">
    <property type="entry name" value="JC7323"/>
</dbReference>
<dbReference type="RefSeq" id="NP_001076152.1">
    <property type="nucleotide sequence ID" value="NM_001082683.1"/>
</dbReference>
<dbReference type="SMR" id="Q9MZ03"/>
<dbReference type="FunCoup" id="Q9MZ03">
    <property type="interactions" value="111"/>
</dbReference>
<dbReference type="STRING" id="9986.ENSOCUP00000040603"/>
<dbReference type="GlyCosmos" id="Q9MZ03">
    <property type="glycosylation" value="5 sites, No reported glycans"/>
</dbReference>
<dbReference type="PaxDb" id="9986-ENSOCUP00000015283"/>
<dbReference type="GeneID" id="100009409"/>
<dbReference type="KEGG" id="ocu:100009409"/>
<dbReference type="CTD" id="952"/>
<dbReference type="eggNOG" id="ENOG502S1HV">
    <property type="taxonomic scope" value="Eukaryota"/>
</dbReference>
<dbReference type="InParanoid" id="Q9MZ03"/>
<dbReference type="OrthoDB" id="10028716at2759"/>
<dbReference type="Proteomes" id="UP000001811">
    <property type="component" value="Unplaced"/>
</dbReference>
<dbReference type="GO" id="GO:0005789">
    <property type="term" value="C:endoplasmic reticulum membrane"/>
    <property type="evidence" value="ECO:0007669"/>
    <property type="project" value="UniProtKB-SubCell"/>
</dbReference>
<dbReference type="GO" id="GO:0043231">
    <property type="term" value="C:intracellular membrane-bounded organelle"/>
    <property type="evidence" value="ECO:0000314"/>
    <property type="project" value="UniProtKB"/>
</dbReference>
<dbReference type="GO" id="GO:0005886">
    <property type="term" value="C:plasma membrane"/>
    <property type="evidence" value="ECO:0000314"/>
    <property type="project" value="UniProtKB"/>
</dbReference>
<dbReference type="GO" id="GO:0061809">
    <property type="term" value="F:NAD+ nucleosidase activity, cyclic ADP-ribose generating"/>
    <property type="evidence" value="ECO:0000314"/>
    <property type="project" value="UniProtKB"/>
</dbReference>
<dbReference type="GO" id="GO:0016849">
    <property type="term" value="F:phosphorus-oxygen lyase activity"/>
    <property type="evidence" value="ECO:0007669"/>
    <property type="project" value="TreeGrafter"/>
</dbReference>
<dbReference type="GO" id="GO:0016740">
    <property type="term" value="F:transferase activity"/>
    <property type="evidence" value="ECO:0007669"/>
    <property type="project" value="UniProtKB-KW"/>
</dbReference>
<dbReference type="GO" id="GO:0035556">
    <property type="term" value="P:intracellular signal transduction"/>
    <property type="evidence" value="ECO:0000314"/>
    <property type="project" value="UniProtKB"/>
</dbReference>
<dbReference type="GO" id="GO:0030890">
    <property type="term" value="P:positive regulation of B cell proliferation"/>
    <property type="evidence" value="ECO:0007669"/>
    <property type="project" value="TreeGrafter"/>
</dbReference>
<dbReference type="CDD" id="cd04759">
    <property type="entry name" value="Rib_hydrolase"/>
    <property type="match status" value="1"/>
</dbReference>
<dbReference type="Gene3D" id="1.20.82.10">
    <property type="entry name" value="ADP Ribosyl Cyclase, Chain A, domain 1"/>
    <property type="match status" value="1"/>
</dbReference>
<dbReference type="Gene3D" id="3.40.50.720">
    <property type="entry name" value="NAD(P)-binding Rossmann-like Domain"/>
    <property type="match status" value="1"/>
</dbReference>
<dbReference type="InterPro" id="IPR003193">
    <property type="entry name" value="ADP-ribosyl_cyclase"/>
</dbReference>
<dbReference type="PANTHER" id="PTHR10912">
    <property type="entry name" value="ADP-RIBOSYL CYCLASE"/>
    <property type="match status" value="1"/>
</dbReference>
<dbReference type="PANTHER" id="PTHR10912:SF5">
    <property type="entry name" value="ADP-RIBOSYL CYCLASE_CYCLIC ADP-RIBOSE HYDROLASE 1"/>
    <property type="match status" value="1"/>
</dbReference>
<dbReference type="Pfam" id="PF02267">
    <property type="entry name" value="Rib_hydrolayse"/>
    <property type="match status" value="1"/>
</dbReference>
<dbReference type="SUPFAM" id="SSF52309">
    <property type="entry name" value="N-(deoxy)ribosyltransferase-like"/>
    <property type="match status" value="1"/>
</dbReference>
<sequence length="298" mass="33637">MPDYEFSPASGDRPRSWISKQVLIVLGVCLPVILALAIWVGVLTWRQSSMGATDHVSAIVLGRCLTYTRNMHPELRNQDCKKILNTFTSAFVSKDPCNITKEDYQPLIDLVTQTVPCNKTLFWSRSKELAHQYSGIQKEMFTLEDTLLGYIADNLVWCGDPRTSEVKEEFCPYRNENCSSTATSVFWTVVSQKFAESACGTVYVMLNGSRTTAFSKASTFGSVEVFNLHPDRVHTLHAWVMHDIGGVERDSCLGSSIKELKSIVNQRNISFFCQDDYRPARFVQCVRHPEHPSCSVLM</sequence>
<name>CD38_RABIT</name>